<evidence type="ECO:0000250" key="1">
    <source>
        <dbReference type="UniProtKB" id="Q40577"/>
    </source>
</evidence>
<evidence type="ECO:0000255" key="2"/>
<evidence type="ECO:0000269" key="3">
    <source>
    </source>
</evidence>
<evidence type="ECO:0000269" key="4">
    <source>
    </source>
</evidence>
<evidence type="ECO:0000303" key="5">
    <source>
    </source>
</evidence>
<evidence type="ECO:0000305" key="6"/>
<evidence type="ECO:0000312" key="7">
    <source>
        <dbReference type="Araport" id="AT5G48110"/>
    </source>
</evidence>
<evidence type="ECO:0000312" key="8">
    <source>
        <dbReference type="EMBL" id="BAB11075.1"/>
    </source>
</evidence>
<comment type="function">
    <text evidence="4">Does not possess diterpene synthase activity.</text>
</comment>
<comment type="subcellular location">
    <subcellularLocation>
        <location evidence="2">Plastid</location>
        <location evidence="2">Chloroplast</location>
    </subcellularLocation>
</comment>
<comment type="tissue specificity">
    <text evidence="3">Predominantly expressed in roots but also in leaves and stems.</text>
</comment>
<comment type="similarity">
    <text evidence="6">Belongs to the terpene synthase family. Tpsa subfamily.</text>
</comment>
<comment type="caution">
    <text evidence="4">TPS20 in Arabidopsis ecotype Columbia lacks dolabellane-type diterpene synthase activity because of a 17 amino acid deletion and several mutations in its sequence. TPS20 protein in ecotype Cvi is functional and possesses dolabellane-type diterpene synthase activity.</text>
</comment>
<comment type="sequence caution" evidence="6">
    <conflict type="erroneous initiation">
        <sequence resource="EMBL-CDS" id="AAL91230"/>
    </conflict>
    <text>Truncated N-terminus.</text>
</comment>
<comment type="sequence caution" evidence="6">
    <conflict type="miscellaneous discrepancy">
        <sequence resource="EMBL-CDS" id="AAL91230"/>
    </conflict>
    <text>Intron retention.</text>
</comment>
<name>TPS20_ARATH</name>
<keyword id="KW-0150">Chloroplast</keyword>
<keyword id="KW-0456">Lyase</keyword>
<keyword id="KW-0460">Magnesium</keyword>
<keyword id="KW-0464">Manganese</keyword>
<keyword id="KW-0479">Metal-binding</keyword>
<keyword id="KW-0934">Plastid</keyword>
<keyword id="KW-1185">Reference proteome</keyword>
<keyword id="KW-0809">Transit peptide</keyword>
<accession>Q9FI27</accession>
<accession>F4K067</accession>
<accession>Q8RXC7</accession>
<gene>
    <name evidence="5" type="primary">TPS20</name>
    <name evidence="7" type="ordered locus">At5g48110</name>
    <name evidence="8" type="ORF">MDN11.20</name>
</gene>
<sequence>MEAITKNGSLSQTLVHCGPKSLSSFIPVRCLRFSKNPFPKKLVVTRARTSINSDHEAANRPLFQFPPSLLDDRFLSISANQSEIDSLGRDIEALKAKVSEKLVCMDVKERIHLIHLLVSLGVAYHFEKQIEEFLKVDFENVEDMNLGEEDMYSISVIFRVFRLYRHKLSSDVFNRFKEENGDFKKCLLDDKKSLTKQWASRGNTWNYFVGGSNEEHLSGHIKNVLYLSQQENAEVVMSREYIQFYEQETHHDETLLKFAKINFKFMQLHYVQELQTIVKWWKELDLESKIPNYYRVRAVECLYWAMAVYMEPQYSVARIILSKSLVLWTIIDDLYDAYCTLPEAIAFTENMERWETDAIDMPDHMKVLLRSLIDLMEDFKGEVRSEGRLYSVEYGIDEWKRLFRADLTISKWARTGYIPNYDEYMEVGIVTGGVDVTVAFAFIGMGEAGKEAFDWIRSRPKFIQTIDLKSRLRDDVATYKDEMARGEIATGINCYMKQYKVTEEEAFLEFHRRIKHTSKLVNEEYFKTTVPLKLVRIAFNVGRVIDTNYKHGDGLTYTGIVGGQITSLFLDLITI</sequence>
<dbReference type="EMBL" id="AB017064">
    <property type="protein sequence ID" value="BAB11075.1"/>
    <property type="molecule type" value="Genomic_DNA"/>
</dbReference>
<dbReference type="EMBL" id="CP002688">
    <property type="status" value="NOT_ANNOTATED_CDS"/>
    <property type="molecule type" value="Genomic_DNA"/>
</dbReference>
<dbReference type="EMBL" id="AY081341">
    <property type="protein sequence ID" value="AAL91230.1"/>
    <property type="status" value="ALT_SEQ"/>
    <property type="molecule type" value="mRNA"/>
</dbReference>
<dbReference type="EMBL" id="BT000253">
    <property type="protein sequence ID" value="AAN15572.1"/>
    <property type="molecule type" value="mRNA"/>
</dbReference>
<dbReference type="RefSeq" id="NP_001318758.1">
    <property type="nucleotide sequence ID" value="NM_001344758.1"/>
</dbReference>
<dbReference type="SMR" id="Q9FI27"/>
<dbReference type="FunCoup" id="Q9FI27">
    <property type="interactions" value="22"/>
</dbReference>
<dbReference type="STRING" id="3702.Q9FI27"/>
<dbReference type="PaxDb" id="3702-AT5G48110.1"/>
<dbReference type="GeneID" id="834863"/>
<dbReference type="KEGG" id="ath:AT5G48110"/>
<dbReference type="Araport" id="AT5G48110"/>
<dbReference type="TAIR" id="AT5G48110"/>
<dbReference type="eggNOG" id="ENOG502QUCN">
    <property type="taxonomic scope" value="Eukaryota"/>
</dbReference>
<dbReference type="InParanoid" id="Q9FI27"/>
<dbReference type="PhylomeDB" id="Q9FI27"/>
<dbReference type="BioCyc" id="ARA:AT5G48110-MONOMER"/>
<dbReference type="PRO" id="PR:Q9FI27"/>
<dbReference type="Proteomes" id="UP000006548">
    <property type="component" value="Chromosome 5"/>
</dbReference>
<dbReference type="ExpressionAtlas" id="Q9FI27">
    <property type="expression patterns" value="baseline and differential"/>
</dbReference>
<dbReference type="GO" id="GO:0009507">
    <property type="term" value="C:chloroplast"/>
    <property type="evidence" value="ECO:0007669"/>
    <property type="project" value="UniProtKB-SubCell"/>
</dbReference>
<dbReference type="GO" id="GO:0009975">
    <property type="term" value="F:cyclase activity"/>
    <property type="evidence" value="ECO:0000318"/>
    <property type="project" value="GO_Central"/>
</dbReference>
<dbReference type="GO" id="GO:0000287">
    <property type="term" value="F:magnesium ion binding"/>
    <property type="evidence" value="ECO:0007669"/>
    <property type="project" value="InterPro"/>
</dbReference>
<dbReference type="GO" id="GO:0010333">
    <property type="term" value="F:terpene synthase activity"/>
    <property type="evidence" value="ECO:0007669"/>
    <property type="project" value="InterPro"/>
</dbReference>
<dbReference type="GO" id="GO:0016102">
    <property type="term" value="P:diterpenoid biosynthetic process"/>
    <property type="evidence" value="ECO:0007669"/>
    <property type="project" value="InterPro"/>
</dbReference>
<dbReference type="GO" id="GO:0051762">
    <property type="term" value="P:sesquiterpene biosynthetic process"/>
    <property type="evidence" value="ECO:0000318"/>
    <property type="project" value="GO_Central"/>
</dbReference>
<dbReference type="CDD" id="cd00684">
    <property type="entry name" value="Terpene_cyclase_plant_C1"/>
    <property type="match status" value="1"/>
</dbReference>
<dbReference type="FunFam" id="1.10.600.10:FF:000007">
    <property type="entry name" value="Isoprene synthase, chloroplastic"/>
    <property type="match status" value="1"/>
</dbReference>
<dbReference type="Gene3D" id="1.10.600.10">
    <property type="entry name" value="Farnesyl Diphosphate Synthase"/>
    <property type="match status" value="1"/>
</dbReference>
<dbReference type="Gene3D" id="1.50.10.130">
    <property type="entry name" value="Terpene synthase, N-terminal domain"/>
    <property type="match status" value="1"/>
</dbReference>
<dbReference type="InterPro" id="IPR008949">
    <property type="entry name" value="Isoprenoid_synthase_dom_sf"/>
</dbReference>
<dbReference type="InterPro" id="IPR034741">
    <property type="entry name" value="Terpene_cyclase-like_1_C"/>
</dbReference>
<dbReference type="InterPro" id="IPR044814">
    <property type="entry name" value="Terpene_cyclase_plant_C1"/>
</dbReference>
<dbReference type="InterPro" id="IPR001906">
    <property type="entry name" value="Terpene_synth_N"/>
</dbReference>
<dbReference type="InterPro" id="IPR036965">
    <property type="entry name" value="Terpene_synth_N_sf"/>
</dbReference>
<dbReference type="InterPro" id="IPR050148">
    <property type="entry name" value="Terpene_synthase-like"/>
</dbReference>
<dbReference type="InterPro" id="IPR005630">
    <property type="entry name" value="Terpene_synthase_metal-bd"/>
</dbReference>
<dbReference type="InterPro" id="IPR008930">
    <property type="entry name" value="Terpenoid_cyclase/PrenylTrfase"/>
</dbReference>
<dbReference type="PANTHER" id="PTHR31225">
    <property type="entry name" value="OS04G0344100 PROTEIN-RELATED"/>
    <property type="match status" value="1"/>
</dbReference>
<dbReference type="PANTHER" id="PTHR31225:SF242">
    <property type="entry name" value="TERPENOID SYNTHASE 9"/>
    <property type="match status" value="1"/>
</dbReference>
<dbReference type="Pfam" id="PF01397">
    <property type="entry name" value="Terpene_synth"/>
    <property type="match status" value="1"/>
</dbReference>
<dbReference type="Pfam" id="PF03936">
    <property type="entry name" value="Terpene_synth_C"/>
    <property type="match status" value="1"/>
</dbReference>
<dbReference type="SFLD" id="SFLDS00005">
    <property type="entry name" value="Isoprenoid_Synthase_Type_I"/>
    <property type="match status" value="1"/>
</dbReference>
<dbReference type="SFLD" id="SFLDG01019">
    <property type="entry name" value="Terpene_Cyclase_Like_1_C_Termi"/>
    <property type="match status" value="1"/>
</dbReference>
<dbReference type="SUPFAM" id="SSF48239">
    <property type="entry name" value="Terpenoid cyclases/Protein prenyltransferases"/>
    <property type="match status" value="1"/>
</dbReference>
<dbReference type="SUPFAM" id="SSF48576">
    <property type="entry name" value="Terpenoid synthases"/>
    <property type="match status" value="1"/>
</dbReference>
<organism>
    <name type="scientific">Arabidopsis thaliana</name>
    <name type="common">Mouse-ear cress</name>
    <dbReference type="NCBI Taxonomy" id="3702"/>
    <lineage>
        <taxon>Eukaryota</taxon>
        <taxon>Viridiplantae</taxon>
        <taxon>Streptophyta</taxon>
        <taxon>Embryophyta</taxon>
        <taxon>Tracheophyta</taxon>
        <taxon>Spermatophyta</taxon>
        <taxon>Magnoliopsida</taxon>
        <taxon>eudicotyledons</taxon>
        <taxon>Gunneridae</taxon>
        <taxon>Pentapetalae</taxon>
        <taxon>rosids</taxon>
        <taxon>malvids</taxon>
        <taxon>Brassicales</taxon>
        <taxon>Brassicaceae</taxon>
        <taxon>Camelineae</taxon>
        <taxon>Arabidopsis</taxon>
    </lineage>
</organism>
<feature type="transit peptide" description="Chloroplast" evidence="2">
    <location>
        <begin position="1"/>
        <end position="52"/>
    </location>
</feature>
<feature type="chain" id="PRO_0000403711" description="Inactive terpenoid synthase 20, chloroplastic">
    <location>
        <begin position="53"/>
        <end position="575"/>
    </location>
</feature>
<feature type="short sequence motif" description="DDXXD motif" evidence="6">
    <location>
        <begin position="332"/>
        <end position="336"/>
    </location>
</feature>
<feature type="binding site" evidence="1">
    <location>
        <position position="332"/>
    </location>
    <ligand>
        <name>Mg(2+)</name>
        <dbReference type="ChEBI" id="CHEBI:18420"/>
        <label>1</label>
    </ligand>
</feature>
<feature type="binding site" evidence="1">
    <location>
        <position position="332"/>
    </location>
    <ligand>
        <name>Mg(2+)</name>
        <dbReference type="ChEBI" id="CHEBI:18420"/>
        <label>2</label>
    </ligand>
</feature>
<feature type="binding site" evidence="1">
    <location>
        <position position="336"/>
    </location>
    <ligand>
        <name>Mg(2+)</name>
        <dbReference type="ChEBI" id="CHEBI:18420"/>
        <label>1</label>
    </ligand>
</feature>
<feature type="binding site" evidence="1">
    <location>
        <position position="336"/>
    </location>
    <ligand>
        <name>Mg(2+)</name>
        <dbReference type="ChEBI" id="CHEBI:18420"/>
        <label>2</label>
    </ligand>
</feature>
<feature type="binding site" evidence="1">
    <location>
        <position position="474"/>
    </location>
    <ligand>
        <name>Mg(2+)</name>
        <dbReference type="ChEBI" id="CHEBI:18420"/>
        <label>3</label>
    </ligand>
</feature>
<feature type="binding site" evidence="1">
    <location>
        <position position="478"/>
    </location>
    <ligand>
        <name>Mg(2+)</name>
        <dbReference type="ChEBI" id="CHEBI:18420"/>
        <label>3</label>
    </ligand>
</feature>
<feature type="binding site" evidence="1">
    <location>
        <position position="482"/>
    </location>
    <ligand>
        <name>Mg(2+)</name>
        <dbReference type="ChEBI" id="CHEBI:18420"/>
        <label>3</label>
    </ligand>
</feature>
<reference key="1">
    <citation type="journal article" date="1999" name="DNA Res.">
        <title>Structural analysis of Arabidopsis thaliana chromosome 5. IX. Sequence features of the regions of 1,011,550 bp covered by seventeen P1 and TAC clones.</title>
        <authorList>
            <person name="Kaneko T."/>
            <person name="Katoh T."/>
            <person name="Sato S."/>
            <person name="Nakamura Y."/>
            <person name="Asamizu E."/>
            <person name="Kotani H."/>
            <person name="Miyajima N."/>
            <person name="Tabata S."/>
        </authorList>
    </citation>
    <scope>NUCLEOTIDE SEQUENCE [LARGE SCALE GENOMIC DNA]</scope>
    <source>
        <strain>cv. Columbia</strain>
    </source>
</reference>
<reference key="2">
    <citation type="journal article" date="2017" name="Plant J.">
        <title>Araport11: a complete reannotation of the Arabidopsis thaliana reference genome.</title>
        <authorList>
            <person name="Cheng C.Y."/>
            <person name="Krishnakumar V."/>
            <person name="Chan A.P."/>
            <person name="Thibaud-Nissen F."/>
            <person name="Schobel S."/>
            <person name="Town C.D."/>
        </authorList>
    </citation>
    <scope>GENOME REANNOTATION</scope>
    <source>
        <strain>cv. Columbia</strain>
    </source>
</reference>
<reference key="3">
    <citation type="journal article" date="2003" name="Science">
        <title>Empirical analysis of transcriptional activity in the Arabidopsis genome.</title>
        <authorList>
            <person name="Yamada K."/>
            <person name="Lim J."/>
            <person name="Dale J.M."/>
            <person name="Chen H."/>
            <person name="Shinn P."/>
            <person name="Palm C.J."/>
            <person name="Southwick A.M."/>
            <person name="Wu H.C."/>
            <person name="Kim C.J."/>
            <person name="Nguyen M."/>
            <person name="Pham P.K."/>
            <person name="Cheuk R.F."/>
            <person name="Karlin-Newmann G."/>
            <person name="Liu S.X."/>
            <person name="Lam B."/>
            <person name="Sakano H."/>
            <person name="Wu T."/>
            <person name="Yu G."/>
            <person name="Miranda M."/>
            <person name="Quach H.L."/>
            <person name="Tripp M."/>
            <person name="Chang C.H."/>
            <person name="Lee J.M."/>
            <person name="Toriumi M.J."/>
            <person name="Chan M.M."/>
            <person name="Tang C.C."/>
            <person name="Onodera C.S."/>
            <person name="Deng J.M."/>
            <person name="Akiyama K."/>
            <person name="Ansari Y."/>
            <person name="Arakawa T."/>
            <person name="Banh J."/>
            <person name="Banno F."/>
            <person name="Bowser L."/>
            <person name="Brooks S.Y."/>
            <person name="Carninci P."/>
            <person name="Chao Q."/>
            <person name="Choy N."/>
            <person name="Enju A."/>
            <person name="Goldsmith A.D."/>
            <person name="Gurjal M."/>
            <person name="Hansen N.F."/>
            <person name="Hayashizaki Y."/>
            <person name="Johnson-Hopson C."/>
            <person name="Hsuan V.W."/>
            <person name="Iida K."/>
            <person name="Karnes M."/>
            <person name="Khan S."/>
            <person name="Koesema E."/>
            <person name="Ishida J."/>
            <person name="Jiang P.X."/>
            <person name="Jones T."/>
            <person name="Kawai J."/>
            <person name="Kamiya A."/>
            <person name="Meyers C."/>
            <person name="Nakajima M."/>
            <person name="Narusaka M."/>
            <person name="Seki M."/>
            <person name="Sakurai T."/>
            <person name="Satou M."/>
            <person name="Tamse R."/>
            <person name="Vaysberg M."/>
            <person name="Wallender E.K."/>
            <person name="Wong C."/>
            <person name="Yamamura Y."/>
            <person name="Yuan S."/>
            <person name="Shinozaki K."/>
            <person name="Davis R.W."/>
            <person name="Theologis A."/>
            <person name="Ecker J.R."/>
        </authorList>
    </citation>
    <scope>NUCLEOTIDE SEQUENCE [LARGE SCALE MRNA]</scope>
    <source>
        <strain>cv. Columbia</strain>
    </source>
</reference>
<reference key="4">
    <citation type="journal article" date="2002" name="Mol. Genet. Genomics">
        <title>Genomic analysis of the terpenoid synthase (AtTPS) gene family of Arabidopsis thaliana.</title>
        <authorList>
            <person name="Aubourg S."/>
            <person name="Lecharny A."/>
            <person name="Bohlmann J."/>
        </authorList>
    </citation>
    <scope>GENE FAMILY</scope>
    <scope>NOMENCLATURE</scope>
</reference>
<reference key="5">
    <citation type="journal article" date="2003" name="Plant Cell">
        <title>Biosynthesis and emission of terpenoid volatiles from Arabidopsis flowers.</title>
        <authorList>
            <person name="Chen F."/>
            <person name="Tholl D."/>
            <person name="D'Auria J.C."/>
            <person name="Farooq A."/>
            <person name="Pichersky E."/>
            <person name="Gershenzon J."/>
        </authorList>
    </citation>
    <scope>TISSUE SPECIFICITY</scope>
</reference>
<reference key="6">
    <citation type="journal article" date="2003" name="Plant Mol. Biol.">
        <title>Genome organization in Arabidopsis thaliana: a survey for genes involved in isoprenoid and chlorophyll metabolism.</title>
        <authorList>
            <person name="Lange B.M."/>
            <person name="Ghassemian M."/>
        </authorList>
    </citation>
    <scope>GENE FAMILY</scope>
</reference>
<reference key="7">
    <citation type="journal article" date="2016" name="Front. Plant Sci.">
        <title>Identification of a dolabellane type diterpene synthase and other root-expressed diterpene synthases in Arabidopsis.</title>
        <authorList>
            <person name="Wang Q."/>
            <person name="Jia M."/>
            <person name="Huh J.H."/>
            <person name="Muchlinski A."/>
            <person name="Peters R.J."/>
            <person name="Tholl D."/>
        </authorList>
    </citation>
    <scope>FUNCTION</scope>
    <scope>LACK OF CATALYTIC ACTIVITY</scope>
</reference>
<protein>
    <recommendedName>
        <fullName evidence="6">Inactive terpenoid synthase 20, chloroplastic</fullName>
        <shortName evidence="5">AtTPS20</shortName>
    </recommendedName>
</protein>
<proteinExistence type="evidence at protein level"/>